<name>RL6_VIBC1</name>
<feature type="chain" id="PRO_1000055329" description="Large ribosomal subunit protein uL6">
    <location>
        <begin position="1"/>
        <end position="177"/>
    </location>
</feature>
<evidence type="ECO:0000255" key="1">
    <source>
        <dbReference type="HAMAP-Rule" id="MF_01365"/>
    </source>
</evidence>
<evidence type="ECO:0000305" key="2"/>
<organism>
    <name type="scientific">Vibrio campbellii (strain ATCC BAA-1116)</name>
    <dbReference type="NCBI Taxonomy" id="2902295"/>
    <lineage>
        <taxon>Bacteria</taxon>
        <taxon>Pseudomonadati</taxon>
        <taxon>Pseudomonadota</taxon>
        <taxon>Gammaproteobacteria</taxon>
        <taxon>Vibrionales</taxon>
        <taxon>Vibrionaceae</taxon>
        <taxon>Vibrio</taxon>
    </lineage>
</organism>
<protein>
    <recommendedName>
        <fullName evidence="1">Large ribosomal subunit protein uL6</fullName>
    </recommendedName>
    <alternativeName>
        <fullName evidence="2">50S ribosomal protein L6</fullName>
    </alternativeName>
</protein>
<reference key="1">
    <citation type="submission" date="2007-08" db="EMBL/GenBank/DDBJ databases">
        <authorList>
            <consortium name="The Vibrio harveyi Genome Sequencing Project"/>
            <person name="Bassler B."/>
            <person name="Clifton S.W."/>
            <person name="Fulton L."/>
            <person name="Delehaunty K."/>
            <person name="Fronick C."/>
            <person name="Harrison M."/>
            <person name="Markivic C."/>
            <person name="Fulton R."/>
            <person name="Tin-Wollam A.-M."/>
            <person name="Shah N."/>
            <person name="Pepin K."/>
            <person name="Nash W."/>
            <person name="Thiruvilangam P."/>
            <person name="Bhonagiri V."/>
            <person name="Waters C."/>
            <person name="Tu K.C."/>
            <person name="Irgon J."/>
            <person name="Wilson R.K."/>
        </authorList>
    </citation>
    <scope>NUCLEOTIDE SEQUENCE [LARGE SCALE GENOMIC DNA]</scope>
    <source>
        <strain>ATCC BAA-1116 / BB120</strain>
    </source>
</reference>
<gene>
    <name evidence="1" type="primary">rplF</name>
    <name type="ordered locus">VIBHAR_00745</name>
</gene>
<proteinExistence type="inferred from homology"/>
<dbReference type="EMBL" id="CP000789">
    <property type="protein sequence ID" value="ABU69746.1"/>
    <property type="molecule type" value="Genomic_DNA"/>
</dbReference>
<dbReference type="RefSeq" id="WP_012126876.1">
    <property type="nucleotide sequence ID" value="NC_022269.1"/>
</dbReference>
<dbReference type="SMR" id="A7MWH2"/>
<dbReference type="KEGG" id="vha:VIBHAR_00745"/>
<dbReference type="PATRIC" id="fig|338187.25.peg.1869"/>
<dbReference type="Proteomes" id="UP000008152">
    <property type="component" value="Chromosome I"/>
</dbReference>
<dbReference type="GO" id="GO:0022625">
    <property type="term" value="C:cytosolic large ribosomal subunit"/>
    <property type="evidence" value="ECO:0007669"/>
    <property type="project" value="TreeGrafter"/>
</dbReference>
<dbReference type="GO" id="GO:0019843">
    <property type="term" value="F:rRNA binding"/>
    <property type="evidence" value="ECO:0007669"/>
    <property type="project" value="UniProtKB-UniRule"/>
</dbReference>
<dbReference type="GO" id="GO:0003735">
    <property type="term" value="F:structural constituent of ribosome"/>
    <property type="evidence" value="ECO:0007669"/>
    <property type="project" value="InterPro"/>
</dbReference>
<dbReference type="GO" id="GO:0002181">
    <property type="term" value="P:cytoplasmic translation"/>
    <property type="evidence" value="ECO:0007669"/>
    <property type="project" value="TreeGrafter"/>
</dbReference>
<dbReference type="FunFam" id="3.90.930.12:FF:000001">
    <property type="entry name" value="50S ribosomal protein L6"/>
    <property type="match status" value="1"/>
</dbReference>
<dbReference type="FunFam" id="3.90.930.12:FF:000002">
    <property type="entry name" value="50S ribosomal protein L6"/>
    <property type="match status" value="1"/>
</dbReference>
<dbReference type="Gene3D" id="3.90.930.12">
    <property type="entry name" value="Ribosomal protein L6, alpha-beta domain"/>
    <property type="match status" value="2"/>
</dbReference>
<dbReference type="HAMAP" id="MF_01365_B">
    <property type="entry name" value="Ribosomal_uL6_B"/>
    <property type="match status" value="1"/>
</dbReference>
<dbReference type="InterPro" id="IPR000702">
    <property type="entry name" value="Ribosomal_uL6-like"/>
</dbReference>
<dbReference type="InterPro" id="IPR036789">
    <property type="entry name" value="Ribosomal_uL6-like_a/b-dom_sf"/>
</dbReference>
<dbReference type="InterPro" id="IPR020040">
    <property type="entry name" value="Ribosomal_uL6_a/b-dom"/>
</dbReference>
<dbReference type="InterPro" id="IPR019906">
    <property type="entry name" value="Ribosomal_uL6_bac-type"/>
</dbReference>
<dbReference type="InterPro" id="IPR002358">
    <property type="entry name" value="Ribosomal_uL6_CS"/>
</dbReference>
<dbReference type="NCBIfam" id="TIGR03654">
    <property type="entry name" value="L6_bact"/>
    <property type="match status" value="1"/>
</dbReference>
<dbReference type="PANTHER" id="PTHR11655">
    <property type="entry name" value="60S/50S RIBOSOMAL PROTEIN L6/L9"/>
    <property type="match status" value="1"/>
</dbReference>
<dbReference type="PANTHER" id="PTHR11655:SF14">
    <property type="entry name" value="LARGE RIBOSOMAL SUBUNIT PROTEIN UL6M"/>
    <property type="match status" value="1"/>
</dbReference>
<dbReference type="Pfam" id="PF00347">
    <property type="entry name" value="Ribosomal_L6"/>
    <property type="match status" value="2"/>
</dbReference>
<dbReference type="PIRSF" id="PIRSF002162">
    <property type="entry name" value="Ribosomal_L6"/>
    <property type="match status" value="1"/>
</dbReference>
<dbReference type="PRINTS" id="PR00059">
    <property type="entry name" value="RIBOSOMALL6"/>
</dbReference>
<dbReference type="SUPFAM" id="SSF56053">
    <property type="entry name" value="Ribosomal protein L6"/>
    <property type="match status" value="2"/>
</dbReference>
<dbReference type="PROSITE" id="PS00525">
    <property type="entry name" value="RIBOSOMAL_L6_1"/>
    <property type="match status" value="1"/>
</dbReference>
<comment type="function">
    <text evidence="1">This protein binds to the 23S rRNA, and is important in its secondary structure. It is located near the subunit interface in the base of the L7/L12 stalk, and near the tRNA binding site of the peptidyltransferase center.</text>
</comment>
<comment type="subunit">
    <text evidence="1">Part of the 50S ribosomal subunit.</text>
</comment>
<comment type="similarity">
    <text evidence="1">Belongs to the universal ribosomal protein uL6 family.</text>
</comment>
<keyword id="KW-0687">Ribonucleoprotein</keyword>
<keyword id="KW-0689">Ribosomal protein</keyword>
<keyword id="KW-0694">RNA-binding</keyword>
<keyword id="KW-0699">rRNA-binding</keyword>
<sequence length="177" mass="18765">MSRVAKAPVAIPAGVEVKLNGQEITVKGAKGELTRVLNDAVVIAQEENNLTFGPKEGAANAWAQAGTARALVNNMVVGVTEGFTKKLTLKGVGYRAAIKGNAVGLTLGFSHPVEHELPAGIKAECPSQTEIIITGCDKQLVGQVAADIRSYRQPEPYKGKGVRYADENVRTKEAKKK</sequence>
<accession>A7MWH2</accession>